<accession>P12279</accession>
<reference key="1">
    <citation type="journal article" date="1987" name="J. Biol. Chem.">
        <title>Structure and expression of dog apolipoprotein C-II and C-III mRNAs. Implications for the evolution and functional constraints of apolipoprotein structure.</title>
        <authorList>
            <person name="Datta S."/>
            <person name="Li W.-H."/>
            <person name="Ghosh I."/>
            <person name="Luo C.-C."/>
            <person name="Chan L."/>
        </authorList>
    </citation>
    <scope>NUCLEOTIDE SEQUENCE [MRNA]</scope>
    <scope>TISSUE SPECIFICITY</scope>
</reference>
<organism>
    <name type="scientific">Canis lupus familiaris</name>
    <name type="common">Dog</name>
    <name type="synonym">Canis familiaris</name>
    <dbReference type="NCBI Taxonomy" id="9615"/>
    <lineage>
        <taxon>Eukaryota</taxon>
        <taxon>Metazoa</taxon>
        <taxon>Chordata</taxon>
        <taxon>Craniata</taxon>
        <taxon>Vertebrata</taxon>
        <taxon>Euteleostomi</taxon>
        <taxon>Mammalia</taxon>
        <taxon>Eutheria</taxon>
        <taxon>Laurasiatheria</taxon>
        <taxon>Carnivora</taxon>
        <taxon>Caniformia</taxon>
        <taxon>Canidae</taxon>
        <taxon>Canis</taxon>
    </lineage>
</organism>
<gene>
    <name type="primary">APOC3</name>
</gene>
<proteinExistence type="evidence at transcript level"/>
<protein>
    <recommendedName>
        <fullName>Apolipoprotein C-III</fullName>
        <shortName>Apo-CIII</shortName>
        <shortName>ApoC-III</shortName>
    </recommendedName>
    <alternativeName>
        <fullName>Apolipoprotein C3</fullName>
    </alternativeName>
</protein>
<dbReference type="EMBL" id="M17178">
    <property type="protein sequence ID" value="AAA30830.1"/>
    <property type="molecule type" value="mRNA"/>
</dbReference>
<dbReference type="PIR" id="B28487">
    <property type="entry name" value="B28487"/>
</dbReference>
<dbReference type="SMR" id="P12279"/>
<dbReference type="FunCoup" id="P12279">
    <property type="interactions" value="1"/>
</dbReference>
<dbReference type="STRING" id="9615.ENSCAFP00000019635"/>
<dbReference type="GlyCosmos" id="P12279">
    <property type="glycosylation" value="1 site, No reported glycans"/>
</dbReference>
<dbReference type="PaxDb" id="9612-ENSCAFP00000019635"/>
<dbReference type="eggNOG" id="ENOG502SZ00">
    <property type="taxonomic scope" value="Eukaryota"/>
</dbReference>
<dbReference type="InParanoid" id="P12279"/>
<dbReference type="OrthoDB" id="9049572at2759"/>
<dbReference type="Proteomes" id="UP000002254">
    <property type="component" value="Unplaced"/>
</dbReference>
<dbReference type="Proteomes" id="UP000694429">
    <property type="component" value="Unplaced"/>
</dbReference>
<dbReference type="Proteomes" id="UP000694542">
    <property type="component" value="Unplaced"/>
</dbReference>
<dbReference type="Proteomes" id="UP000805418">
    <property type="component" value="Unplaced"/>
</dbReference>
<dbReference type="GO" id="GO:0042627">
    <property type="term" value="C:chylomicron"/>
    <property type="evidence" value="ECO:0000318"/>
    <property type="project" value="GO_Central"/>
</dbReference>
<dbReference type="GO" id="GO:0034363">
    <property type="term" value="C:intermediate-density lipoprotein particle"/>
    <property type="evidence" value="ECO:0000318"/>
    <property type="project" value="GO_Central"/>
</dbReference>
<dbReference type="GO" id="GO:0034366">
    <property type="term" value="C:spherical high-density lipoprotein particle"/>
    <property type="evidence" value="ECO:0000318"/>
    <property type="project" value="GO_Central"/>
</dbReference>
<dbReference type="GO" id="GO:0034361">
    <property type="term" value="C:very-low-density lipoprotein particle"/>
    <property type="evidence" value="ECO:0000318"/>
    <property type="project" value="GO_Central"/>
</dbReference>
<dbReference type="GO" id="GO:0070653">
    <property type="term" value="F:high-density lipoprotein particle receptor binding"/>
    <property type="evidence" value="ECO:0000318"/>
    <property type="project" value="GO_Central"/>
</dbReference>
<dbReference type="GO" id="GO:0055102">
    <property type="term" value="F:lipase inhibitor activity"/>
    <property type="evidence" value="ECO:0000318"/>
    <property type="project" value="GO_Central"/>
</dbReference>
<dbReference type="GO" id="GO:0005543">
    <property type="term" value="F:phospholipid binding"/>
    <property type="evidence" value="ECO:0000318"/>
    <property type="project" value="GO_Central"/>
</dbReference>
<dbReference type="GO" id="GO:0042632">
    <property type="term" value="P:cholesterol homeostasis"/>
    <property type="evidence" value="ECO:0000318"/>
    <property type="project" value="GO_Central"/>
</dbReference>
<dbReference type="GO" id="GO:0006869">
    <property type="term" value="P:lipid transport"/>
    <property type="evidence" value="ECO:0007669"/>
    <property type="project" value="UniProtKB-KW"/>
</dbReference>
<dbReference type="GO" id="GO:0042157">
    <property type="term" value="P:lipoprotein metabolic process"/>
    <property type="evidence" value="ECO:0007669"/>
    <property type="project" value="InterPro"/>
</dbReference>
<dbReference type="GO" id="GO:0010987">
    <property type="term" value="P:negative regulation of high-density lipoprotein particle clearance"/>
    <property type="evidence" value="ECO:0000318"/>
    <property type="project" value="GO_Central"/>
</dbReference>
<dbReference type="GO" id="GO:0010989">
    <property type="term" value="P:negative regulation of low-density lipoprotein particle clearance"/>
    <property type="evidence" value="ECO:0000318"/>
    <property type="project" value="GO_Central"/>
</dbReference>
<dbReference type="GO" id="GO:0010897">
    <property type="term" value="P:negative regulation of triglyceride catabolic process"/>
    <property type="evidence" value="ECO:0000318"/>
    <property type="project" value="GO_Central"/>
</dbReference>
<dbReference type="GO" id="GO:0010916">
    <property type="term" value="P:negative regulation of very-low-density lipoprotein particle clearance"/>
    <property type="evidence" value="ECO:0000318"/>
    <property type="project" value="GO_Central"/>
</dbReference>
<dbReference type="GO" id="GO:0019433">
    <property type="term" value="P:triglyceride catabolic process"/>
    <property type="evidence" value="ECO:0000318"/>
    <property type="project" value="GO_Central"/>
</dbReference>
<dbReference type="GO" id="GO:0070328">
    <property type="term" value="P:triglyceride homeostasis"/>
    <property type="evidence" value="ECO:0000318"/>
    <property type="project" value="GO_Central"/>
</dbReference>
<dbReference type="Gene3D" id="6.10.90.10">
    <property type="entry name" value="Apolipoprotein CIII"/>
    <property type="match status" value="1"/>
</dbReference>
<dbReference type="InterPro" id="IPR008403">
    <property type="entry name" value="Apo-CIII"/>
</dbReference>
<dbReference type="InterPro" id="IPR038195">
    <property type="entry name" value="Apo_CIII_sf"/>
</dbReference>
<dbReference type="PANTHER" id="PTHR14225">
    <property type="entry name" value="APOLIPOPROTEIN C-III"/>
    <property type="match status" value="1"/>
</dbReference>
<dbReference type="PANTHER" id="PTHR14225:SF0">
    <property type="entry name" value="APOLIPOPROTEIN C-III"/>
    <property type="match status" value="1"/>
</dbReference>
<dbReference type="Pfam" id="PF05778">
    <property type="entry name" value="Apo-CIII"/>
    <property type="match status" value="1"/>
</dbReference>
<comment type="function">
    <text evidence="2">Component of triglyceride-rich very low density lipoproteins (VLDL) and high density lipoproteins (HDL) in plasma. Plays a multifaceted role in triglyceride homeostasis. Intracellularly, promotes hepatic very low density lipoprotein 1 (VLDL1) assembly and secretion; extracellularly, attenuates hydrolysis and clearance of triglyceride-rich lipoproteins (TRLs). Impairs the lipolysis of TRLs by inhibiting lipoprotein lipase and the hepatic uptake of TRLs by remnant receptors. Formed of several curved helices connected via semiflexible hinges, so that it can wrap tightly around the curved micelle surface and easily adapt to the different diameters of its natural binding partners.</text>
</comment>
<comment type="subcellular location">
    <subcellularLocation>
        <location evidence="2">Secreted</location>
    </subcellularLocation>
</comment>
<comment type="tissue specificity">
    <text evidence="5">Synthesized predominantly in liver and to a lesser degree in intestine.</text>
</comment>
<comment type="PTM">
    <text evidence="2">The most abundant glycoforms are characterized by an O-linked disaccharide galactose linked to N-acetylgalactosamine (Gal-GalNAc), further modified with up to 3 sialic acid residues. Less abundant glycoforms are characterized by more complex and fucosylated glycan moieties. O-glycosylated on Thr-94 with a core 1 or possibly core 8 glycan.</text>
</comment>
<comment type="similarity">
    <text evidence="6">Belongs to the apolipoprotein C3 family.</text>
</comment>
<feature type="signal peptide" evidence="4">
    <location>
        <begin position="1"/>
        <end position="20"/>
    </location>
</feature>
<feature type="chain" id="PRO_0000002029" description="Apolipoprotein C-III">
    <location>
        <begin position="21"/>
        <end position="100"/>
    </location>
</feature>
<feature type="region of interest" description="Lipid-binding" evidence="1">
    <location>
        <begin position="68"/>
        <end position="99"/>
    </location>
</feature>
<feature type="site" description="May interact with the LDL receptor" evidence="2">
    <location>
        <position position="41"/>
    </location>
</feature>
<feature type="modified residue" description="Methionine sulfoxide" evidence="3">
    <location>
        <position position="63"/>
    </location>
</feature>
<feature type="glycosylation site" description="O-linked (GalNAc...) threonine" evidence="2">
    <location>
        <position position="94"/>
    </location>
</feature>
<sequence>MQPRVLLVAALLALLASARALEEEDPSLLGLMQGYMQHATKTAQDTLTSVQESQVAQRARGWMTDSFSSLKDYCSTFKGKFTGFWDSASEAKPTPASDAF</sequence>
<keyword id="KW-0162">Chylomicron</keyword>
<keyword id="KW-0325">Glycoprotein</keyword>
<keyword id="KW-0442">Lipid degradation</keyword>
<keyword id="KW-0443">Lipid metabolism</keyword>
<keyword id="KW-0445">Lipid transport</keyword>
<keyword id="KW-0558">Oxidation</keyword>
<keyword id="KW-1185">Reference proteome</keyword>
<keyword id="KW-0964">Secreted</keyword>
<keyword id="KW-0730">Sialic acid</keyword>
<keyword id="KW-0732">Signal</keyword>
<keyword id="KW-0813">Transport</keyword>
<keyword id="KW-0850">VLDL</keyword>
<name>APOC3_CANLF</name>
<evidence type="ECO:0000250" key="1"/>
<evidence type="ECO:0000250" key="2">
    <source>
        <dbReference type="UniProtKB" id="P02656"/>
    </source>
</evidence>
<evidence type="ECO:0000250" key="3">
    <source>
        <dbReference type="UniProtKB" id="P33622"/>
    </source>
</evidence>
<evidence type="ECO:0000255" key="4"/>
<evidence type="ECO:0000269" key="5">
    <source>
    </source>
</evidence>
<evidence type="ECO:0000305" key="6"/>